<evidence type="ECO:0000255" key="1">
    <source>
        <dbReference type="HAMAP-Rule" id="MF_00402"/>
    </source>
</evidence>
<evidence type="ECO:0000305" key="2"/>
<organism>
    <name type="scientific">Escherichia coli (strain ATCC 8739 / DSM 1576 / NBRC 3972 / NCIMB 8545 / WDCM 00012 / Crooks)</name>
    <dbReference type="NCBI Taxonomy" id="481805"/>
    <lineage>
        <taxon>Bacteria</taxon>
        <taxon>Pseudomonadati</taxon>
        <taxon>Pseudomonadota</taxon>
        <taxon>Gammaproteobacteria</taxon>
        <taxon>Enterobacterales</taxon>
        <taxon>Enterobacteriaceae</taxon>
        <taxon>Escherichia</taxon>
    </lineage>
</organism>
<proteinExistence type="inferred from homology"/>
<feature type="chain" id="PRO_1000080350" description="Large ribosomal subunit protein bL19">
    <location>
        <begin position="1"/>
        <end position="115"/>
    </location>
</feature>
<gene>
    <name evidence="1" type="primary">rplS</name>
    <name type="ordered locus">EcolC_1077</name>
</gene>
<sequence>MSNIIKQLEQEQMKQDVPSFRPGDTVEVKVWVVEGSKKRLQAFEGVVIAIRNRGLHSAFTVRKISNGEGVERVFQTHSPVVDSISVKRRGAVRKAKLYYLRERTGKAARIKERLN</sequence>
<keyword id="KW-0687">Ribonucleoprotein</keyword>
<keyword id="KW-0689">Ribosomal protein</keyword>
<reference key="1">
    <citation type="submission" date="2008-02" db="EMBL/GenBank/DDBJ databases">
        <title>Complete sequence of Escherichia coli C str. ATCC 8739.</title>
        <authorList>
            <person name="Copeland A."/>
            <person name="Lucas S."/>
            <person name="Lapidus A."/>
            <person name="Glavina del Rio T."/>
            <person name="Dalin E."/>
            <person name="Tice H."/>
            <person name="Bruce D."/>
            <person name="Goodwin L."/>
            <person name="Pitluck S."/>
            <person name="Kiss H."/>
            <person name="Brettin T."/>
            <person name="Detter J.C."/>
            <person name="Han C."/>
            <person name="Kuske C.R."/>
            <person name="Schmutz J."/>
            <person name="Larimer F."/>
            <person name="Land M."/>
            <person name="Hauser L."/>
            <person name="Kyrpides N."/>
            <person name="Mikhailova N."/>
            <person name="Ingram L."/>
            <person name="Richardson P."/>
        </authorList>
    </citation>
    <scope>NUCLEOTIDE SEQUENCE [LARGE SCALE GENOMIC DNA]</scope>
    <source>
        <strain>ATCC 8739 / DSM 1576 / NBRC 3972 / NCIMB 8545 / WDCM 00012 / Crooks</strain>
    </source>
</reference>
<name>RL19_ECOLC</name>
<protein>
    <recommendedName>
        <fullName evidence="1">Large ribosomal subunit protein bL19</fullName>
    </recommendedName>
    <alternativeName>
        <fullName evidence="2">50S ribosomal protein L19</fullName>
    </alternativeName>
</protein>
<comment type="function">
    <text evidence="1">This protein is located at the 30S-50S ribosomal subunit interface and may play a role in the structure and function of the aminoacyl-tRNA binding site.</text>
</comment>
<comment type="similarity">
    <text evidence="1">Belongs to the bacterial ribosomal protein bL19 family.</text>
</comment>
<accession>B1IVM7</accession>
<dbReference type="EMBL" id="CP000946">
    <property type="protein sequence ID" value="ACA76744.1"/>
    <property type="molecule type" value="Genomic_DNA"/>
</dbReference>
<dbReference type="RefSeq" id="WP_000065253.1">
    <property type="nucleotide sequence ID" value="NZ_MTFT01000037.1"/>
</dbReference>
<dbReference type="SMR" id="B1IVM7"/>
<dbReference type="GeneID" id="93774456"/>
<dbReference type="KEGG" id="ecl:EcolC_1077"/>
<dbReference type="HOGENOM" id="CLU_103507_2_1_6"/>
<dbReference type="GO" id="GO:0022625">
    <property type="term" value="C:cytosolic large ribosomal subunit"/>
    <property type="evidence" value="ECO:0007669"/>
    <property type="project" value="TreeGrafter"/>
</dbReference>
<dbReference type="GO" id="GO:0003735">
    <property type="term" value="F:structural constituent of ribosome"/>
    <property type="evidence" value="ECO:0007669"/>
    <property type="project" value="InterPro"/>
</dbReference>
<dbReference type="GO" id="GO:0006412">
    <property type="term" value="P:translation"/>
    <property type="evidence" value="ECO:0007669"/>
    <property type="project" value="UniProtKB-UniRule"/>
</dbReference>
<dbReference type="FunFam" id="2.30.30.790:FF:000001">
    <property type="entry name" value="50S ribosomal protein L19"/>
    <property type="match status" value="1"/>
</dbReference>
<dbReference type="Gene3D" id="2.30.30.790">
    <property type="match status" value="1"/>
</dbReference>
<dbReference type="HAMAP" id="MF_00402">
    <property type="entry name" value="Ribosomal_bL19"/>
    <property type="match status" value="1"/>
</dbReference>
<dbReference type="InterPro" id="IPR001857">
    <property type="entry name" value="Ribosomal_bL19"/>
</dbReference>
<dbReference type="InterPro" id="IPR018257">
    <property type="entry name" value="Ribosomal_bL19_CS"/>
</dbReference>
<dbReference type="InterPro" id="IPR038657">
    <property type="entry name" value="Ribosomal_bL19_sf"/>
</dbReference>
<dbReference type="InterPro" id="IPR008991">
    <property type="entry name" value="Translation_prot_SH3-like_sf"/>
</dbReference>
<dbReference type="NCBIfam" id="TIGR01024">
    <property type="entry name" value="rplS_bact"/>
    <property type="match status" value="1"/>
</dbReference>
<dbReference type="PANTHER" id="PTHR15680:SF9">
    <property type="entry name" value="LARGE RIBOSOMAL SUBUNIT PROTEIN BL19M"/>
    <property type="match status" value="1"/>
</dbReference>
<dbReference type="PANTHER" id="PTHR15680">
    <property type="entry name" value="RIBOSOMAL PROTEIN L19"/>
    <property type="match status" value="1"/>
</dbReference>
<dbReference type="Pfam" id="PF01245">
    <property type="entry name" value="Ribosomal_L19"/>
    <property type="match status" value="1"/>
</dbReference>
<dbReference type="PIRSF" id="PIRSF002191">
    <property type="entry name" value="Ribosomal_L19"/>
    <property type="match status" value="1"/>
</dbReference>
<dbReference type="PRINTS" id="PR00061">
    <property type="entry name" value="RIBOSOMALL19"/>
</dbReference>
<dbReference type="SUPFAM" id="SSF50104">
    <property type="entry name" value="Translation proteins SH3-like domain"/>
    <property type="match status" value="1"/>
</dbReference>
<dbReference type="PROSITE" id="PS01015">
    <property type="entry name" value="RIBOSOMAL_L19"/>
    <property type="match status" value="1"/>
</dbReference>